<accession>O88786</accession>
<accession>A3F812</accession>
<accession>Q3V2V5</accession>
<feature type="signal peptide" evidence="3">
    <location>
        <begin position="1"/>
        <end position="21"/>
    </location>
</feature>
<feature type="chain" id="PRO_0000378452" description="Interleukin-13 receptor subunit alpha-2">
    <location>
        <begin position="22"/>
        <end position="383"/>
    </location>
</feature>
<feature type="topological domain" description="Extracellular" evidence="3">
    <location>
        <begin position="22"/>
        <end position="334"/>
    </location>
</feature>
<feature type="transmembrane region" description="Helical" evidence="3">
    <location>
        <begin position="335"/>
        <end position="355"/>
    </location>
</feature>
<feature type="topological domain" description="Cytoplasmic" evidence="3">
    <location>
        <begin position="356"/>
        <end position="383"/>
    </location>
</feature>
<feature type="domain" description="Fibronectin type-III 1" evidence="4">
    <location>
        <begin position="28"/>
        <end position="128"/>
    </location>
</feature>
<feature type="domain" description="Fibronectin type-III 2" evidence="4">
    <location>
        <begin position="131"/>
        <end position="219"/>
    </location>
</feature>
<feature type="domain" description="Fibronectin type-III 3" evidence="4">
    <location>
        <begin position="234"/>
        <end position="332"/>
    </location>
</feature>
<feature type="short sequence motif" description="WSXWS motif">
    <location>
        <begin position="316"/>
        <end position="320"/>
    </location>
</feature>
<feature type="glycosylation site" description="N-linked (GlcNAc...) asparagine" evidence="3">
    <location>
        <position position="109"/>
    </location>
</feature>
<feature type="glycosylation site" description="N-linked (GlcNAc...) asparagine" evidence="3">
    <location>
        <position position="162"/>
    </location>
</feature>
<feature type="glycosylation site" description="N-linked (GlcNAc...) asparagine" evidence="3">
    <location>
        <position position="209"/>
    </location>
</feature>
<feature type="glycosylation site" description="N-linked (GlcNAc...) asparagine" evidence="3">
    <location>
        <position position="293"/>
    </location>
</feature>
<feature type="disulfide bond" evidence="1">
    <location>
        <begin position="59"/>
        <end position="107"/>
    </location>
</feature>
<feature type="disulfide bond" evidence="1">
    <location>
        <begin position="139"/>
        <end position="149"/>
    </location>
</feature>
<feature type="disulfide bond" evidence="1">
    <location>
        <begin position="178"/>
        <end position="191"/>
    </location>
</feature>
<feature type="disulfide bond" evidence="1">
    <location>
        <begin position="263"/>
        <end position="310"/>
    </location>
</feature>
<feature type="splice variant" id="VSP_037588" description="In isoform 2." evidence="6">
    <original>GYTGPDSKIIFIV</original>
    <variation>EPPCGSEQRSVCL</variation>
    <location>
        <begin position="327"/>
        <end position="339"/>
    </location>
</feature>
<feature type="splice variant" id="VSP_037589" description="In isoform 2." evidence="6">
    <location>
        <begin position="340"/>
        <end position="383"/>
    </location>
</feature>
<feature type="sequence conflict" description="In Ref. 3; BAE43400." evidence="7" ref="3">
    <original>G</original>
    <variation>W</variation>
    <location>
        <position position="330"/>
    </location>
</feature>
<dbReference type="EMBL" id="U65747">
    <property type="protein sequence ID" value="AAC33240.1"/>
    <property type="molecule type" value="mRNA"/>
</dbReference>
<dbReference type="EMBL" id="EF219410">
    <property type="protein sequence ID" value="ABN11267.1"/>
    <property type="molecule type" value="mRNA"/>
</dbReference>
<dbReference type="EMBL" id="AK089687">
    <property type="protein sequence ID" value="BAE43400.1"/>
    <property type="molecule type" value="mRNA"/>
</dbReference>
<dbReference type="EMBL" id="AL662932">
    <property type="status" value="NOT_ANNOTATED_CDS"/>
    <property type="molecule type" value="Genomic_DNA"/>
</dbReference>
<dbReference type="EMBL" id="AL807780">
    <property type="status" value="NOT_ANNOTATED_CDS"/>
    <property type="molecule type" value="Genomic_DNA"/>
</dbReference>
<dbReference type="EMBL" id="BX005200">
    <property type="status" value="NOT_ANNOTATED_CDS"/>
    <property type="molecule type" value="Genomic_DNA"/>
</dbReference>
<dbReference type="EMBL" id="CH466610">
    <property type="protein sequence ID" value="EDL14709.1"/>
    <property type="molecule type" value="Genomic_DNA"/>
</dbReference>
<dbReference type="EMBL" id="BC003723">
    <property type="protein sequence ID" value="AAH03723.1"/>
    <property type="molecule type" value="mRNA"/>
</dbReference>
<dbReference type="CCDS" id="CCDS30460.1">
    <molecule id="O88786-1"/>
</dbReference>
<dbReference type="RefSeq" id="NP_001292988.1">
    <molecule id="O88786-2"/>
    <property type="nucleotide sequence ID" value="NM_001306059.1"/>
</dbReference>
<dbReference type="RefSeq" id="NP_032382.1">
    <molecule id="O88786-1"/>
    <property type="nucleotide sequence ID" value="NM_008356.4"/>
</dbReference>
<dbReference type="RefSeq" id="XP_006528770.1">
    <molecule id="O88786-1"/>
    <property type="nucleotide sequence ID" value="XM_006528707.4"/>
</dbReference>
<dbReference type="RefSeq" id="XP_006528771.1">
    <molecule id="O88786-1"/>
    <property type="nucleotide sequence ID" value="XM_006528708.4"/>
</dbReference>
<dbReference type="RefSeq" id="XP_017173884.1">
    <molecule id="O88786-2"/>
    <property type="nucleotide sequence ID" value="XM_017318395.2"/>
</dbReference>
<dbReference type="RefSeq" id="XP_030107094.1">
    <molecule id="O88786-2"/>
    <property type="nucleotide sequence ID" value="XM_030251234.2"/>
</dbReference>
<dbReference type="RefSeq" id="XP_036017719.1">
    <molecule id="O88786-1"/>
    <property type="nucleotide sequence ID" value="XM_036161826.1"/>
</dbReference>
<dbReference type="SMR" id="O88786"/>
<dbReference type="BioGRID" id="200615">
    <property type="interactions" value="5"/>
</dbReference>
<dbReference type="CORUM" id="O88786"/>
<dbReference type="FunCoup" id="O88786">
    <property type="interactions" value="407"/>
</dbReference>
<dbReference type="IntAct" id="O88786">
    <property type="interactions" value="6"/>
</dbReference>
<dbReference type="STRING" id="10090.ENSMUSP00000033646"/>
<dbReference type="GlyCosmos" id="O88786">
    <property type="glycosylation" value="4 sites, No reported glycans"/>
</dbReference>
<dbReference type="GlyGen" id="O88786">
    <property type="glycosylation" value="4 sites, 1 N-linked glycan (1 site)"/>
</dbReference>
<dbReference type="PaxDb" id="10090-ENSMUSP00000033646"/>
<dbReference type="ProteomicsDB" id="273299">
    <molecule id="O88786-1"/>
</dbReference>
<dbReference type="ProteomicsDB" id="273300">
    <molecule id="O88786-2"/>
</dbReference>
<dbReference type="Antibodypedia" id="29593">
    <property type="antibodies" value="644 antibodies from 39 providers"/>
</dbReference>
<dbReference type="DNASU" id="16165"/>
<dbReference type="Ensembl" id="ENSMUST00000033646.9">
    <molecule id="O88786-1"/>
    <property type="protein sequence ID" value="ENSMUSP00000033646.3"/>
    <property type="gene ID" value="ENSMUSG00000031289.11"/>
</dbReference>
<dbReference type="Ensembl" id="ENSMUST00000112827.2">
    <molecule id="O88786-1"/>
    <property type="protein sequence ID" value="ENSMUSP00000108446.2"/>
    <property type="gene ID" value="ENSMUSG00000031289.11"/>
</dbReference>
<dbReference type="GeneID" id="16165"/>
<dbReference type="KEGG" id="mmu:16165"/>
<dbReference type="UCSC" id="uc009unf.1">
    <molecule id="O88786-1"/>
    <property type="organism name" value="mouse"/>
</dbReference>
<dbReference type="UCSC" id="uc012hqe.1">
    <molecule id="O88786-2"/>
    <property type="organism name" value="mouse"/>
</dbReference>
<dbReference type="AGR" id="MGI:1277954"/>
<dbReference type="CTD" id="3598"/>
<dbReference type="MGI" id="MGI:1277954">
    <property type="gene designation" value="Il13ra2"/>
</dbReference>
<dbReference type="VEuPathDB" id="HostDB:ENSMUSG00000031289"/>
<dbReference type="eggNOG" id="ENOG502RV4W">
    <property type="taxonomic scope" value="Eukaryota"/>
</dbReference>
<dbReference type="GeneTree" id="ENSGT00940000159971"/>
<dbReference type="HOGENOM" id="CLU_054773_1_0_1"/>
<dbReference type="InParanoid" id="O88786"/>
<dbReference type="OMA" id="GPIPSQC"/>
<dbReference type="OrthoDB" id="9826641at2759"/>
<dbReference type="PhylomeDB" id="O88786"/>
<dbReference type="TreeFam" id="TF331549"/>
<dbReference type="Reactome" id="R-MMU-6785807">
    <property type="pathway name" value="Interleukin-4 and Interleukin-13 signaling"/>
</dbReference>
<dbReference type="BioGRID-ORCS" id="16165">
    <property type="hits" value="1 hit in 76 CRISPR screens"/>
</dbReference>
<dbReference type="PRO" id="PR:O88786"/>
<dbReference type="Proteomes" id="UP000000589">
    <property type="component" value="Chromosome X"/>
</dbReference>
<dbReference type="RNAct" id="O88786">
    <property type="molecule type" value="protein"/>
</dbReference>
<dbReference type="Bgee" id="ENSMUSG00000031289">
    <property type="expression patterns" value="Expressed in cumulus cell and 42 other cell types or tissues"/>
</dbReference>
<dbReference type="GO" id="GO:0009897">
    <property type="term" value="C:external side of plasma membrane"/>
    <property type="evidence" value="ECO:0000314"/>
    <property type="project" value="MGI"/>
</dbReference>
<dbReference type="GO" id="GO:0005576">
    <property type="term" value="C:extracellular region"/>
    <property type="evidence" value="ECO:0007669"/>
    <property type="project" value="UniProtKB-SubCell"/>
</dbReference>
<dbReference type="GO" id="GO:0005615">
    <property type="term" value="C:extracellular space"/>
    <property type="evidence" value="ECO:0000314"/>
    <property type="project" value="MGI"/>
</dbReference>
<dbReference type="GO" id="GO:0005886">
    <property type="term" value="C:plasma membrane"/>
    <property type="evidence" value="ECO:0007669"/>
    <property type="project" value="UniProtKB-SubCell"/>
</dbReference>
<dbReference type="GO" id="GO:0004896">
    <property type="term" value="F:cytokine receptor activity"/>
    <property type="evidence" value="ECO:0007669"/>
    <property type="project" value="Ensembl"/>
</dbReference>
<dbReference type="GO" id="GO:0016064">
    <property type="term" value="P:immunoglobulin mediated immune response"/>
    <property type="evidence" value="ECO:0000315"/>
    <property type="project" value="MGI"/>
</dbReference>
<dbReference type="GO" id="GO:0035772">
    <property type="term" value="P:interleukin-13-mediated signaling pathway"/>
    <property type="evidence" value="ECO:0007669"/>
    <property type="project" value="Ensembl"/>
</dbReference>
<dbReference type="GO" id="GO:0002638">
    <property type="term" value="P:negative regulation of immunoglobulin production"/>
    <property type="evidence" value="ECO:0000315"/>
    <property type="project" value="MGI"/>
</dbReference>
<dbReference type="GO" id="GO:0043305">
    <property type="term" value="P:negative regulation of mast cell degranulation"/>
    <property type="evidence" value="ECO:0000315"/>
    <property type="project" value="MGI"/>
</dbReference>
<dbReference type="FunFam" id="2.60.40.10:FF:001186">
    <property type="entry name" value="Interleukin 13 receptor subunit alpha 2"/>
    <property type="match status" value="1"/>
</dbReference>
<dbReference type="FunFam" id="2.60.40.10:FF:001396">
    <property type="entry name" value="Interleukin 13 receptor subunit alpha 2"/>
    <property type="match status" value="1"/>
</dbReference>
<dbReference type="FunFam" id="2.60.40.10:FF:000958">
    <property type="entry name" value="Interleukin-13 receptor subunit alpha-2"/>
    <property type="match status" value="1"/>
</dbReference>
<dbReference type="Gene3D" id="2.60.40.10">
    <property type="entry name" value="Immunoglobulins"/>
    <property type="match status" value="3"/>
</dbReference>
<dbReference type="InterPro" id="IPR003961">
    <property type="entry name" value="FN3_dom"/>
</dbReference>
<dbReference type="InterPro" id="IPR036116">
    <property type="entry name" value="FN3_sf"/>
</dbReference>
<dbReference type="InterPro" id="IPR013783">
    <property type="entry name" value="Ig-like_fold"/>
</dbReference>
<dbReference type="InterPro" id="IPR003532">
    <property type="entry name" value="Short_hematopoietin_rcpt_2_CS"/>
</dbReference>
<dbReference type="InterPro" id="IPR015321">
    <property type="entry name" value="TypeI_recpt_CBD"/>
</dbReference>
<dbReference type="PANTHER" id="PTHR23037">
    <property type="entry name" value="CYTOKINE RECEPTOR"/>
    <property type="match status" value="1"/>
</dbReference>
<dbReference type="PANTHER" id="PTHR23037:SF45">
    <property type="entry name" value="INTERLEUKIN 13 RECEPTOR SUBUNIT ALPHA 2"/>
    <property type="match status" value="1"/>
</dbReference>
<dbReference type="Pfam" id="PF09240">
    <property type="entry name" value="IL6Ra-bind"/>
    <property type="match status" value="1"/>
</dbReference>
<dbReference type="SUPFAM" id="SSF49265">
    <property type="entry name" value="Fibronectin type III"/>
    <property type="match status" value="3"/>
</dbReference>
<dbReference type="PROSITE" id="PS50853">
    <property type="entry name" value="FN3"/>
    <property type="match status" value="2"/>
</dbReference>
<dbReference type="PROSITE" id="PS01356">
    <property type="entry name" value="HEMATOPO_REC_S_F2"/>
    <property type="match status" value="1"/>
</dbReference>
<organism>
    <name type="scientific">Mus musculus</name>
    <name type="common">Mouse</name>
    <dbReference type="NCBI Taxonomy" id="10090"/>
    <lineage>
        <taxon>Eukaryota</taxon>
        <taxon>Metazoa</taxon>
        <taxon>Chordata</taxon>
        <taxon>Craniata</taxon>
        <taxon>Vertebrata</taxon>
        <taxon>Euteleostomi</taxon>
        <taxon>Mammalia</taxon>
        <taxon>Eutheria</taxon>
        <taxon>Euarchontoglires</taxon>
        <taxon>Glires</taxon>
        <taxon>Rodentia</taxon>
        <taxon>Myomorpha</taxon>
        <taxon>Muroidea</taxon>
        <taxon>Muridae</taxon>
        <taxon>Murinae</taxon>
        <taxon>Mus</taxon>
        <taxon>Mus</taxon>
    </lineage>
</organism>
<reference key="1">
    <citation type="journal article" date="1998" name="J. Immunol.">
        <title>The murine IL-13 receptor alpha 2: molecular cloning, characterization, and comparison with murine IL-13 receptor alpha 1.</title>
        <authorList>
            <person name="Donaldson D.D."/>
            <person name="Whitters M.J."/>
            <person name="Fitz L."/>
            <person name="Neben T.Y."/>
            <person name="Finnerty H."/>
            <person name="Henderson S.L."/>
            <person name="O'Hara R.M. Jr."/>
            <person name="Beier D.R."/>
            <person name="Turner K.J."/>
            <person name="Wood C.R."/>
            <person name="Collins M."/>
        </authorList>
    </citation>
    <scope>NUCLEOTIDE SEQUENCE [MRNA] (ISOFORM 1)</scope>
    <scope>FUNCTION</scope>
    <source>
        <strain>C3H/HeJ</strain>
        <tissue>Thymus</tissue>
    </source>
</reference>
<reference key="2">
    <citation type="journal article" date="2006" name="J. Immunol.">
        <title>Allergy-driven alternative splicing of IL-13 receptor alpha2 yields distinct membrane and soluble forms.</title>
        <authorList>
            <person name="Tabata Y."/>
            <person name="Chen W."/>
            <person name="Warrier M.R."/>
            <person name="Gibson A.M."/>
            <person name="Daines M.O."/>
            <person name="Hershey G.K."/>
        </authorList>
    </citation>
    <scope>NUCLEOTIDE SEQUENCE [MRNA] (ISOFORM 2)</scope>
    <scope>SUBCELLULAR LOCATION</scope>
    <scope>ALTERNATIVE SPLICING</scope>
    <source>
        <strain>BALB/cJ</strain>
        <tissue>Spleen</tissue>
    </source>
</reference>
<reference key="3">
    <citation type="journal article" date="2005" name="Science">
        <title>The transcriptional landscape of the mammalian genome.</title>
        <authorList>
            <person name="Carninci P."/>
            <person name="Kasukawa T."/>
            <person name="Katayama S."/>
            <person name="Gough J."/>
            <person name="Frith M.C."/>
            <person name="Maeda N."/>
            <person name="Oyama R."/>
            <person name="Ravasi T."/>
            <person name="Lenhard B."/>
            <person name="Wells C."/>
            <person name="Kodzius R."/>
            <person name="Shimokawa K."/>
            <person name="Bajic V.B."/>
            <person name="Brenner S.E."/>
            <person name="Batalov S."/>
            <person name="Forrest A.R."/>
            <person name="Zavolan M."/>
            <person name="Davis M.J."/>
            <person name="Wilming L.G."/>
            <person name="Aidinis V."/>
            <person name="Allen J.E."/>
            <person name="Ambesi-Impiombato A."/>
            <person name="Apweiler R."/>
            <person name="Aturaliya R.N."/>
            <person name="Bailey T.L."/>
            <person name="Bansal M."/>
            <person name="Baxter L."/>
            <person name="Beisel K.W."/>
            <person name="Bersano T."/>
            <person name="Bono H."/>
            <person name="Chalk A.M."/>
            <person name="Chiu K.P."/>
            <person name="Choudhary V."/>
            <person name="Christoffels A."/>
            <person name="Clutterbuck D.R."/>
            <person name="Crowe M.L."/>
            <person name="Dalla E."/>
            <person name="Dalrymple B.P."/>
            <person name="de Bono B."/>
            <person name="Della Gatta G."/>
            <person name="di Bernardo D."/>
            <person name="Down T."/>
            <person name="Engstrom P."/>
            <person name="Fagiolini M."/>
            <person name="Faulkner G."/>
            <person name="Fletcher C.F."/>
            <person name="Fukushima T."/>
            <person name="Furuno M."/>
            <person name="Futaki S."/>
            <person name="Gariboldi M."/>
            <person name="Georgii-Hemming P."/>
            <person name="Gingeras T.R."/>
            <person name="Gojobori T."/>
            <person name="Green R.E."/>
            <person name="Gustincich S."/>
            <person name="Harbers M."/>
            <person name="Hayashi Y."/>
            <person name="Hensch T.K."/>
            <person name="Hirokawa N."/>
            <person name="Hill D."/>
            <person name="Huminiecki L."/>
            <person name="Iacono M."/>
            <person name="Ikeo K."/>
            <person name="Iwama A."/>
            <person name="Ishikawa T."/>
            <person name="Jakt M."/>
            <person name="Kanapin A."/>
            <person name="Katoh M."/>
            <person name="Kawasawa Y."/>
            <person name="Kelso J."/>
            <person name="Kitamura H."/>
            <person name="Kitano H."/>
            <person name="Kollias G."/>
            <person name="Krishnan S.P."/>
            <person name="Kruger A."/>
            <person name="Kummerfeld S.K."/>
            <person name="Kurochkin I.V."/>
            <person name="Lareau L.F."/>
            <person name="Lazarevic D."/>
            <person name="Lipovich L."/>
            <person name="Liu J."/>
            <person name="Liuni S."/>
            <person name="McWilliam S."/>
            <person name="Madan Babu M."/>
            <person name="Madera M."/>
            <person name="Marchionni L."/>
            <person name="Matsuda H."/>
            <person name="Matsuzawa S."/>
            <person name="Miki H."/>
            <person name="Mignone F."/>
            <person name="Miyake S."/>
            <person name="Morris K."/>
            <person name="Mottagui-Tabar S."/>
            <person name="Mulder N."/>
            <person name="Nakano N."/>
            <person name="Nakauchi H."/>
            <person name="Ng P."/>
            <person name="Nilsson R."/>
            <person name="Nishiguchi S."/>
            <person name="Nishikawa S."/>
            <person name="Nori F."/>
            <person name="Ohara O."/>
            <person name="Okazaki Y."/>
            <person name="Orlando V."/>
            <person name="Pang K.C."/>
            <person name="Pavan W.J."/>
            <person name="Pavesi G."/>
            <person name="Pesole G."/>
            <person name="Petrovsky N."/>
            <person name="Piazza S."/>
            <person name="Reed J."/>
            <person name="Reid J.F."/>
            <person name="Ring B.Z."/>
            <person name="Ringwald M."/>
            <person name="Rost B."/>
            <person name="Ruan Y."/>
            <person name="Salzberg S.L."/>
            <person name="Sandelin A."/>
            <person name="Schneider C."/>
            <person name="Schoenbach C."/>
            <person name="Sekiguchi K."/>
            <person name="Semple C.A."/>
            <person name="Seno S."/>
            <person name="Sessa L."/>
            <person name="Sheng Y."/>
            <person name="Shibata Y."/>
            <person name="Shimada H."/>
            <person name="Shimada K."/>
            <person name="Silva D."/>
            <person name="Sinclair B."/>
            <person name="Sperling S."/>
            <person name="Stupka E."/>
            <person name="Sugiura K."/>
            <person name="Sultana R."/>
            <person name="Takenaka Y."/>
            <person name="Taki K."/>
            <person name="Tammoja K."/>
            <person name="Tan S.L."/>
            <person name="Tang S."/>
            <person name="Taylor M.S."/>
            <person name="Tegner J."/>
            <person name="Teichmann S.A."/>
            <person name="Ueda H.R."/>
            <person name="van Nimwegen E."/>
            <person name="Verardo R."/>
            <person name="Wei C.L."/>
            <person name="Yagi K."/>
            <person name="Yamanishi H."/>
            <person name="Zabarovsky E."/>
            <person name="Zhu S."/>
            <person name="Zimmer A."/>
            <person name="Hide W."/>
            <person name="Bult C."/>
            <person name="Grimmond S.M."/>
            <person name="Teasdale R.D."/>
            <person name="Liu E.T."/>
            <person name="Brusic V."/>
            <person name="Quackenbush J."/>
            <person name="Wahlestedt C."/>
            <person name="Mattick J.S."/>
            <person name="Hume D.A."/>
            <person name="Kai C."/>
            <person name="Sasaki D."/>
            <person name="Tomaru Y."/>
            <person name="Fukuda S."/>
            <person name="Kanamori-Katayama M."/>
            <person name="Suzuki M."/>
            <person name="Aoki J."/>
            <person name="Arakawa T."/>
            <person name="Iida J."/>
            <person name="Imamura K."/>
            <person name="Itoh M."/>
            <person name="Kato T."/>
            <person name="Kawaji H."/>
            <person name="Kawagashira N."/>
            <person name="Kawashima T."/>
            <person name="Kojima M."/>
            <person name="Kondo S."/>
            <person name="Konno H."/>
            <person name="Nakano K."/>
            <person name="Ninomiya N."/>
            <person name="Nishio T."/>
            <person name="Okada M."/>
            <person name="Plessy C."/>
            <person name="Shibata K."/>
            <person name="Shiraki T."/>
            <person name="Suzuki S."/>
            <person name="Tagami M."/>
            <person name="Waki K."/>
            <person name="Watahiki A."/>
            <person name="Okamura-Oho Y."/>
            <person name="Suzuki H."/>
            <person name="Kawai J."/>
            <person name="Hayashizaki Y."/>
        </authorList>
    </citation>
    <scope>NUCLEOTIDE SEQUENCE [LARGE SCALE MRNA] (ISOFORM 1)</scope>
    <source>
        <strain>NOD</strain>
        <tissue>Spleen</tissue>
    </source>
</reference>
<reference key="4">
    <citation type="journal article" date="2009" name="PLoS Biol.">
        <title>Lineage-specific biology revealed by a finished genome assembly of the mouse.</title>
        <authorList>
            <person name="Church D.M."/>
            <person name="Goodstadt L."/>
            <person name="Hillier L.W."/>
            <person name="Zody M.C."/>
            <person name="Goldstein S."/>
            <person name="She X."/>
            <person name="Bult C.J."/>
            <person name="Agarwala R."/>
            <person name="Cherry J.L."/>
            <person name="DiCuccio M."/>
            <person name="Hlavina W."/>
            <person name="Kapustin Y."/>
            <person name="Meric P."/>
            <person name="Maglott D."/>
            <person name="Birtle Z."/>
            <person name="Marques A.C."/>
            <person name="Graves T."/>
            <person name="Zhou S."/>
            <person name="Teague B."/>
            <person name="Potamousis K."/>
            <person name="Churas C."/>
            <person name="Place M."/>
            <person name="Herschleb J."/>
            <person name="Runnheim R."/>
            <person name="Forrest D."/>
            <person name="Amos-Landgraf J."/>
            <person name="Schwartz D.C."/>
            <person name="Cheng Z."/>
            <person name="Lindblad-Toh K."/>
            <person name="Eichler E.E."/>
            <person name="Ponting C.P."/>
        </authorList>
    </citation>
    <scope>NUCLEOTIDE SEQUENCE [LARGE SCALE GENOMIC DNA]</scope>
    <source>
        <strain>C57BL/6J</strain>
    </source>
</reference>
<reference key="5">
    <citation type="submission" date="2005-09" db="EMBL/GenBank/DDBJ databases">
        <authorList>
            <person name="Mural R.J."/>
            <person name="Adams M.D."/>
            <person name="Myers E.W."/>
            <person name="Smith H.O."/>
            <person name="Venter J.C."/>
        </authorList>
    </citation>
    <scope>NUCLEOTIDE SEQUENCE [LARGE SCALE GENOMIC DNA]</scope>
</reference>
<reference key="6">
    <citation type="journal article" date="2004" name="Genome Res.">
        <title>The status, quality, and expansion of the NIH full-length cDNA project: the Mammalian Gene Collection (MGC).</title>
        <authorList>
            <consortium name="The MGC Project Team"/>
        </authorList>
    </citation>
    <scope>NUCLEOTIDE SEQUENCE [LARGE SCALE MRNA] (ISOFORM 1)</scope>
    <source>
        <strain>FVB/N</strain>
        <tissue>Mammary tumor</tissue>
    </source>
</reference>
<reference key="7">
    <citation type="journal article" date="2003" name="J. Exp. Med.">
        <title>Enhanced interleukin (IL)-13 responses in mice lacking IL-13 receptor alpha 2.</title>
        <authorList>
            <person name="Wood N."/>
            <person name="Whitters M.J."/>
            <person name="Jacobson B.A."/>
            <person name="Witek J."/>
            <person name="Sypek J.P."/>
            <person name="Kasaian M."/>
            <person name="Eppihimer M.J."/>
            <person name="Unger M."/>
            <person name="Tanaka T."/>
            <person name="Goldman S.J."/>
            <person name="Collins M."/>
            <person name="Donaldson D.D."/>
            <person name="Grusby M.J."/>
        </authorList>
    </citation>
    <scope>FUNCTION</scope>
    <scope>DISRUPTION PHENOTYPE</scope>
</reference>
<evidence type="ECO:0000250" key="1"/>
<evidence type="ECO:0000250" key="2">
    <source>
        <dbReference type="UniProtKB" id="Q14627"/>
    </source>
</evidence>
<evidence type="ECO:0000255" key="3"/>
<evidence type="ECO:0000255" key="4">
    <source>
        <dbReference type="PROSITE-ProRule" id="PRU00316"/>
    </source>
</evidence>
<evidence type="ECO:0000269" key="5">
    <source>
    </source>
</evidence>
<evidence type="ECO:0000303" key="6">
    <source>
    </source>
</evidence>
<evidence type="ECO:0000305" key="7"/>
<protein>
    <recommendedName>
        <fullName>Interleukin-13 receptor subunit alpha-2</fullName>
        <shortName>IL-13 receptor subunit alpha-2</shortName>
        <shortName>IL-13R subunit alpha-2</shortName>
        <shortName>IL-13R-alpha-2</shortName>
        <shortName>IL-13RA2</shortName>
    </recommendedName>
    <cdAntigenName>CD213a2</cdAntigenName>
</protein>
<gene>
    <name type="primary">Il13ra2</name>
</gene>
<proteinExistence type="evidence at protein level"/>
<keyword id="KW-0025">Alternative splicing</keyword>
<keyword id="KW-1003">Cell membrane</keyword>
<keyword id="KW-1015">Disulfide bond</keyword>
<keyword id="KW-0325">Glycoprotein</keyword>
<keyword id="KW-0472">Membrane</keyword>
<keyword id="KW-0675">Receptor</keyword>
<keyword id="KW-1185">Reference proteome</keyword>
<keyword id="KW-0677">Repeat</keyword>
<keyword id="KW-0964">Secreted</keyword>
<keyword id="KW-0732">Signal</keyword>
<keyword id="KW-0812">Transmembrane</keyword>
<keyword id="KW-1133">Transmembrane helix</keyword>
<name>I13R2_MOUSE</name>
<comment type="function">
    <text evidence="2 5">Cell surface receptor that plays a role in the regulation of IL-13-mediated responses (PubMed:12642602). Functions as a decoy receptor that inhibits IL-13- and IL-4-mediated signal transduction via the JAK-STAT pathway and thereby modulates immune responses and inflammation. Serves as a functional signaling receptor for IL-13 in an alternative pathway involving AP-1 ultimately leading to the production of TGFB1.</text>
</comment>
<comment type="subunit">
    <text evidence="2">Interacts with IL4RA. Interacts with high affinity to interleukin-13 (IL13), but not to interleukin-4 (IL4).</text>
</comment>
<comment type="interaction">
    <interactant intactId="EBI-20260800">
        <id>O88786</id>
    </interactant>
    <interactant intactId="EBI-8392424">
        <id>Q61362</id>
        <label>Chi3l1</label>
    </interactant>
    <organismsDiffer>false</organismsDiffer>
    <experiments>12</experiments>
</comment>
<comment type="interaction">
    <interactant intactId="EBI-20260800">
        <id>O88786</id>
    </interactant>
    <interactant intactId="EBI-20559598">
        <id>P20109</id>
        <label>Il13</label>
    </interactant>
    <organismsDiffer>false</organismsDiffer>
    <experiments>4</experiments>
</comment>
<comment type="interaction">
    <interactant intactId="EBI-20260800">
        <id>O88786</id>
    </interactant>
    <interactant intactId="EBI-3508325">
        <id>P16110</id>
        <label>Lgals3</label>
    </interactant>
    <organismsDiffer>false</organismsDiffer>
    <experiments>2</experiments>
</comment>
<comment type="subcellular location">
    <molecule>Isoform 1</molecule>
    <subcellularLocation>
        <location evidence="2">Cell membrane</location>
        <topology evidence="2">Single-pass type I membrane protein</topology>
    </subcellularLocation>
</comment>
<comment type="subcellular location">
    <molecule>Isoform 2</molecule>
    <subcellularLocation>
        <location>Secreted</location>
    </subcellularLocation>
</comment>
<comment type="alternative products">
    <event type="alternative splicing"/>
    <isoform>
        <id>O88786-1</id>
        <name>1</name>
        <sequence type="displayed"/>
    </isoform>
    <isoform>
        <id>O88786-2</id>
        <name>2</name>
        <sequence type="described" ref="VSP_037588 VSP_037589"/>
    </isoform>
</comment>
<comment type="domain">
    <text evidence="2">The WSXWS motif appears to be necessary for proper protein folding and thereby efficient intracellular transport and cell-surface receptor binding. The cytoplasmic domain functions as an inhibitor of IL-4 or IL-13-dependent activation of the Jak-Stat pathway.</text>
</comment>
<comment type="PTM">
    <text evidence="2">Cleaved by MMP8 leading to a soluble form that is also able to interact with IL13.</text>
</comment>
<comment type="disruption phenotype">
    <text evidence="5">Il13ra2-deficient mice have greatly reduced levels of IL-13 in the serum but significantly greater tissue levels of IL-13 when compared with wild-type mice. Thus, regulates serum and tissue levels of IL-13.</text>
</comment>
<comment type="similarity">
    <text evidence="7">Belongs to the type I cytokine receptor family. Type 5 subfamily.</text>
</comment>
<sequence length="383" mass="44483">MAFVHIRCLCFILLCTITGYSLEIKVNPPQDFEILDPGLLGYLYLQWKPPVVIEKFKGCTLEYELKYRNVDSDSWKTIITRNLIYKDGFDLNKGIEGKIRTHLSEHCTNGSEVQSPWIEASYGISDEGSLETKIQDMKCIYYNWQYLVCSWKPGKTVYSDTNYTMFFWYEGLDHALQCADYLQHDEKNVGCKLSNLDSSDYKDFFICVNGSSKLEPIRSSYTVFQLQNIVKPLPPEFLHISVENSIDIRMKWSTPGGPIPPRCYTYEIVIREDDISWESATDKNDMKLKRRANESEDLCFFVRCKVNIYCADDGIWSEWSEEECWEGYTGPDSKIIFIVPVCLFFIFLLLLLCLIVEKEEPEPTLSLHVDLNKEVCAYEDTLC</sequence>